<sequence>MSKEYRGRRIVLWPANIDSTLSRSEGRKIPLRDAVRKPRVEEIVEAANRLGLNPTVEEAAYPRSWWEQRKRVVVDKVGSKLNTLRMIAQEVKKLREERRRLGK</sequence>
<comment type="function">
    <text evidence="1">Involved in targeting and insertion of nascent membrane proteins into the cytoplasmic membrane. Binds directly to 7S RNA and mediates binding of the 54 kDa subunit of the SRP.</text>
</comment>
<comment type="subunit">
    <text evidence="1">Part of the signal recognition particle protein translocation system, which is composed of SRP and FtsY. Archaeal SRP consists of a 7S RNA molecule of 300 nucleotides and two protein subunits: SRP54 and SRP19.</text>
</comment>
<comment type="subcellular location">
    <subcellularLocation>
        <location evidence="1">Cytoplasm</location>
    </subcellularLocation>
</comment>
<comment type="similarity">
    <text evidence="1">Belongs to the SRP19 family.</text>
</comment>
<keyword id="KW-0963">Cytoplasm</keyword>
<keyword id="KW-1185">Reference proteome</keyword>
<keyword id="KW-0687">Ribonucleoprotein</keyword>
<keyword id="KW-0694">RNA-binding</keyword>
<keyword id="KW-0733">Signal recognition particle</keyword>
<accession>A2BJ20</accession>
<proteinExistence type="inferred from homology"/>
<name>SRP19_HYPBU</name>
<evidence type="ECO:0000255" key="1">
    <source>
        <dbReference type="HAMAP-Rule" id="MF_00305"/>
    </source>
</evidence>
<reference key="1">
    <citation type="journal article" date="2007" name="Archaea">
        <title>The genome of Hyperthermus butylicus: a sulfur-reducing, peptide fermenting, neutrophilic Crenarchaeote growing up to 108 degrees C.</title>
        <authorList>
            <person name="Bruegger K."/>
            <person name="Chen L."/>
            <person name="Stark M."/>
            <person name="Zibat A."/>
            <person name="Redder P."/>
            <person name="Ruepp A."/>
            <person name="Awayez M."/>
            <person name="She Q."/>
            <person name="Garrett R.A."/>
            <person name="Klenk H.-P."/>
        </authorList>
    </citation>
    <scope>NUCLEOTIDE SEQUENCE [LARGE SCALE GENOMIC DNA]</scope>
    <source>
        <strain>DSM 5456 / JCM 9403 / PLM1-5</strain>
    </source>
</reference>
<feature type="chain" id="PRO_0000300744" description="Signal recognition particle 19 kDa protein">
    <location>
        <begin position="1"/>
        <end position="103"/>
    </location>
</feature>
<protein>
    <recommendedName>
        <fullName evidence="1">Signal recognition particle 19 kDa protein</fullName>
        <shortName evidence="1">SRP19</shortName>
    </recommendedName>
</protein>
<gene>
    <name evidence="1" type="primary">srp19</name>
    <name type="ordered locus">Hbut_0106</name>
</gene>
<dbReference type="EMBL" id="CP000493">
    <property type="protein sequence ID" value="ABM79981.1"/>
    <property type="molecule type" value="Genomic_DNA"/>
</dbReference>
<dbReference type="RefSeq" id="WP_011821298.1">
    <property type="nucleotide sequence ID" value="NC_008818.1"/>
</dbReference>
<dbReference type="SMR" id="A2BJ20"/>
<dbReference type="STRING" id="415426.Hbut_0106"/>
<dbReference type="EnsemblBacteria" id="ABM79981">
    <property type="protein sequence ID" value="ABM79981"/>
    <property type="gene ID" value="Hbut_0106"/>
</dbReference>
<dbReference type="GeneID" id="4782177"/>
<dbReference type="KEGG" id="hbu:Hbut_0106"/>
<dbReference type="eggNOG" id="arCOG01217">
    <property type="taxonomic scope" value="Archaea"/>
</dbReference>
<dbReference type="HOGENOM" id="CLU_169299_1_0_2"/>
<dbReference type="OrthoDB" id="56356at2157"/>
<dbReference type="Proteomes" id="UP000002593">
    <property type="component" value="Chromosome"/>
</dbReference>
<dbReference type="GO" id="GO:0048500">
    <property type="term" value="C:signal recognition particle"/>
    <property type="evidence" value="ECO:0007669"/>
    <property type="project" value="UniProtKB-UniRule"/>
</dbReference>
<dbReference type="GO" id="GO:0008312">
    <property type="term" value="F:7S RNA binding"/>
    <property type="evidence" value="ECO:0007669"/>
    <property type="project" value="UniProtKB-UniRule"/>
</dbReference>
<dbReference type="GO" id="GO:0006617">
    <property type="term" value="P:SRP-dependent cotranslational protein targeting to membrane, signal sequence recognition"/>
    <property type="evidence" value="ECO:0007669"/>
    <property type="project" value="TreeGrafter"/>
</dbReference>
<dbReference type="Gene3D" id="3.30.56.30">
    <property type="entry name" value="Signal recognition particle, SRP19-like subunit"/>
    <property type="match status" value="1"/>
</dbReference>
<dbReference type="HAMAP" id="MF_00305">
    <property type="entry name" value="SRP19"/>
    <property type="match status" value="1"/>
</dbReference>
<dbReference type="InterPro" id="IPR002778">
    <property type="entry name" value="Signal_recog_particle_SRP19"/>
</dbReference>
<dbReference type="InterPro" id="IPR036521">
    <property type="entry name" value="SRP19-like_sf"/>
</dbReference>
<dbReference type="InterPro" id="IPR022938">
    <property type="entry name" value="SRP19_arc-type"/>
</dbReference>
<dbReference type="NCBIfam" id="NF001973">
    <property type="entry name" value="PRK00754.1"/>
    <property type="match status" value="1"/>
</dbReference>
<dbReference type="PANTHER" id="PTHR17453">
    <property type="entry name" value="SIGNAL RECOGNITION PARTICLE 19 KD PROTEIN"/>
    <property type="match status" value="1"/>
</dbReference>
<dbReference type="PANTHER" id="PTHR17453:SF0">
    <property type="entry name" value="SIGNAL RECOGNITION PARTICLE 19 KDA PROTEIN"/>
    <property type="match status" value="1"/>
</dbReference>
<dbReference type="Pfam" id="PF01922">
    <property type="entry name" value="SRP19"/>
    <property type="match status" value="1"/>
</dbReference>
<dbReference type="SUPFAM" id="SSF69695">
    <property type="entry name" value="SRP19"/>
    <property type="match status" value="1"/>
</dbReference>
<organism>
    <name type="scientific">Hyperthermus butylicus (strain DSM 5456 / JCM 9403 / PLM1-5)</name>
    <dbReference type="NCBI Taxonomy" id="415426"/>
    <lineage>
        <taxon>Archaea</taxon>
        <taxon>Thermoproteota</taxon>
        <taxon>Thermoprotei</taxon>
        <taxon>Desulfurococcales</taxon>
        <taxon>Pyrodictiaceae</taxon>
        <taxon>Hyperthermus</taxon>
    </lineage>
</organism>